<keyword id="KW-0963">Cytoplasm</keyword>
<keyword id="KW-0378">Hydrolase</keyword>
<keyword id="KW-1185">Reference proteome</keyword>
<keyword id="KW-0694">RNA-binding</keyword>
<keyword id="KW-0820">tRNA-binding</keyword>
<protein>
    <recommendedName>
        <fullName evidence="1">Peptidyl-tRNA hydrolase</fullName>
        <shortName evidence="1">Pth</shortName>
        <ecNumber evidence="1">3.1.1.29</ecNumber>
    </recommendedName>
</protein>
<accession>A9BP19</accession>
<dbReference type="EC" id="3.1.1.29" evidence="1"/>
<dbReference type="EMBL" id="CP000884">
    <property type="protein sequence ID" value="ABX38064.1"/>
    <property type="molecule type" value="Genomic_DNA"/>
</dbReference>
<dbReference type="RefSeq" id="WP_012207233.1">
    <property type="nucleotide sequence ID" value="NC_010002.1"/>
</dbReference>
<dbReference type="SMR" id="A9BP19"/>
<dbReference type="STRING" id="398578.Daci_5435"/>
<dbReference type="GeneID" id="24117401"/>
<dbReference type="KEGG" id="dac:Daci_5435"/>
<dbReference type="eggNOG" id="COG0193">
    <property type="taxonomic scope" value="Bacteria"/>
</dbReference>
<dbReference type="HOGENOM" id="CLU_062456_3_1_4"/>
<dbReference type="Proteomes" id="UP000000784">
    <property type="component" value="Chromosome"/>
</dbReference>
<dbReference type="GO" id="GO:0005737">
    <property type="term" value="C:cytoplasm"/>
    <property type="evidence" value="ECO:0007669"/>
    <property type="project" value="UniProtKB-SubCell"/>
</dbReference>
<dbReference type="GO" id="GO:0004045">
    <property type="term" value="F:peptidyl-tRNA hydrolase activity"/>
    <property type="evidence" value="ECO:0007669"/>
    <property type="project" value="UniProtKB-UniRule"/>
</dbReference>
<dbReference type="GO" id="GO:0000049">
    <property type="term" value="F:tRNA binding"/>
    <property type="evidence" value="ECO:0007669"/>
    <property type="project" value="UniProtKB-UniRule"/>
</dbReference>
<dbReference type="GO" id="GO:0006515">
    <property type="term" value="P:protein quality control for misfolded or incompletely synthesized proteins"/>
    <property type="evidence" value="ECO:0007669"/>
    <property type="project" value="UniProtKB-UniRule"/>
</dbReference>
<dbReference type="GO" id="GO:0072344">
    <property type="term" value="P:rescue of stalled ribosome"/>
    <property type="evidence" value="ECO:0007669"/>
    <property type="project" value="UniProtKB-UniRule"/>
</dbReference>
<dbReference type="CDD" id="cd00462">
    <property type="entry name" value="PTH"/>
    <property type="match status" value="1"/>
</dbReference>
<dbReference type="FunFam" id="3.40.50.1470:FF:000001">
    <property type="entry name" value="Peptidyl-tRNA hydrolase"/>
    <property type="match status" value="1"/>
</dbReference>
<dbReference type="Gene3D" id="3.40.50.1470">
    <property type="entry name" value="Peptidyl-tRNA hydrolase"/>
    <property type="match status" value="1"/>
</dbReference>
<dbReference type="HAMAP" id="MF_00083">
    <property type="entry name" value="Pept_tRNA_hydro_bact"/>
    <property type="match status" value="1"/>
</dbReference>
<dbReference type="InterPro" id="IPR001328">
    <property type="entry name" value="Pept_tRNA_hydro"/>
</dbReference>
<dbReference type="InterPro" id="IPR018171">
    <property type="entry name" value="Pept_tRNA_hydro_CS"/>
</dbReference>
<dbReference type="InterPro" id="IPR036416">
    <property type="entry name" value="Pept_tRNA_hydro_sf"/>
</dbReference>
<dbReference type="NCBIfam" id="TIGR00447">
    <property type="entry name" value="pth"/>
    <property type="match status" value="1"/>
</dbReference>
<dbReference type="PANTHER" id="PTHR17224">
    <property type="entry name" value="PEPTIDYL-TRNA HYDROLASE"/>
    <property type="match status" value="1"/>
</dbReference>
<dbReference type="PANTHER" id="PTHR17224:SF1">
    <property type="entry name" value="PEPTIDYL-TRNA HYDROLASE"/>
    <property type="match status" value="1"/>
</dbReference>
<dbReference type="Pfam" id="PF01195">
    <property type="entry name" value="Pept_tRNA_hydro"/>
    <property type="match status" value="1"/>
</dbReference>
<dbReference type="SUPFAM" id="SSF53178">
    <property type="entry name" value="Peptidyl-tRNA hydrolase-like"/>
    <property type="match status" value="1"/>
</dbReference>
<dbReference type="PROSITE" id="PS01196">
    <property type="entry name" value="PEPT_TRNA_HYDROL_2"/>
    <property type="match status" value="1"/>
</dbReference>
<name>PTH_DELAS</name>
<comment type="function">
    <text evidence="1">Hydrolyzes ribosome-free peptidyl-tRNAs (with 1 or more amino acids incorporated), which drop off the ribosome during protein synthesis, or as a result of ribosome stalling.</text>
</comment>
<comment type="function">
    <text evidence="1">Catalyzes the release of premature peptidyl moieties from peptidyl-tRNA molecules trapped in stalled 50S ribosomal subunits, and thus maintains levels of free tRNAs and 50S ribosomes.</text>
</comment>
<comment type="catalytic activity">
    <reaction evidence="1">
        <text>an N-acyl-L-alpha-aminoacyl-tRNA + H2O = an N-acyl-L-amino acid + a tRNA + H(+)</text>
        <dbReference type="Rhea" id="RHEA:54448"/>
        <dbReference type="Rhea" id="RHEA-COMP:10123"/>
        <dbReference type="Rhea" id="RHEA-COMP:13883"/>
        <dbReference type="ChEBI" id="CHEBI:15377"/>
        <dbReference type="ChEBI" id="CHEBI:15378"/>
        <dbReference type="ChEBI" id="CHEBI:59874"/>
        <dbReference type="ChEBI" id="CHEBI:78442"/>
        <dbReference type="ChEBI" id="CHEBI:138191"/>
        <dbReference type="EC" id="3.1.1.29"/>
    </reaction>
</comment>
<comment type="subunit">
    <text evidence="1">Monomer.</text>
</comment>
<comment type="subcellular location">
    <subcellularLocation>
        <location evidence="1">Cytoplasm</location>
    </subcellularLocation>
</comment>
<comment type="similarity">
    <text evidence="1">Belongs to the PTH family.</text>
</comment>
<proteinExistence type="inferred from homology"/>
<gene>
    <name evidence="1" type="primary">pth</name>
    <name type="ordered locus">Daci_5435</name>
</gene>
<organism>
    <name type="scientific">Delftia acidovorans (strain DSM 14801 / SPH-1)</name>
    <dbReference type="NCBI Taxonomy" id="398578"/>
    <lineage>
        <taxon>Bacteria</taxon>
        <taxon>Pseudomonadati</taxon>
        <taxon>Pseudomonadota</taxon>
        <taxon>Betaproteobacteria</taxon>
        <taxon>Burkholderiales</taxon>
        <taxon>Comamonadaceae</taxon>
        <taxon>Delftia</taxon>
    </lineage>
</organism>
<sequence length="207" mass="23056">MIKLFVGLGNPGPEYEDTRHNAGFWWIDALARELKVQLVPERSYFGLMARASVRGENVWLLQPQTFMNLSGKSVGALARFFKIQPEEVLVVHDELDFEPGQVKLKRGGSHGGHNGLRDIHAQLGSADYWRLRIGIGHPGHKAEVANWVLKKPAPDQRQLIEDSIAHSLKAWPELQAGNMDKATLLIHTTKPPRPKPARPATAESDKG</sequence>
<reference key="1">
    <citation type="submission" date="2007-11" db="EMBL/GenBank/DDBJ databases">
        <title>Complete sequence of Delftia acidovorans DSM 14801 / SPH-1.</title>
        <authorList>
            <person name="Copeland A."/>
            <person name="Lucas S."/>
            <person name="Lapidus A."/>
            <person name="Barry K."/>
            <person name="Glavina del Rio T."/>
            <person name="Dalin E."/>
            <person name="Tice H."/>
            <person name="Pitluck S."/>
            <person name="Lowry S."/>
            <person name="Clum A."/>
            <person name="Schmutz J."/>
            <person name="Larimer F."/>
            <person name="Land M."/>
            <person name="Hauser L."/>
            <person name="Kyrpides N."/>
            <person name="Kim E."/>
            <person name="Schleheck D."/>
            <person name="Richardson P."/>
        </authorList>
    </citation>
    <scope>NUCLEOTIDE SEQUENCE [LARGE SCALE GENOMIC DNA]</scope>
    <source>
        <strain>DSM 14801 / SPH-1</strain>
    </source>
</reference>
<evidence type="ECO:0000255" key="1">
    <source>
        <dbReference type="HAMAP-Rule" id="MF_00083"/>
    </source>
</evidence>
<evidence type="ECO:0000256" key="2">
    <source>
        <dbReference type="SAM" id="MobiDB-lite"/>
    </source>
</evidence>
<feature type="chain" id="PRO_1000092935" description="Peptidyl-tRNA hydrolase">
    <location>
        <begin position="1"/>
        <end position="207"/>
    </location>
</feature>
<feature type="region of interest" description="Disordered" evidence="2">
    <location>
        <begin position="187"/>
        <end position="207"/>
    </location>
</feature>
<feature type="compositionally biased region" description="Low complexity" evidence="2">
    <location>
        <begin position="198"/>
        <end position="207"/>
    </location>
</feature>
<feature type="active site" description="Proton acceptor" evidence="1">
    <location>
        <position position="20"/>
    </location>
</feature>
<feature type="binding site" evidence="1">
    <location>
        <position position="15"/>
    </location>
    <ligand>
        <name>tRNA</name>
        <dbReference type="ChEBI" id="CHEBI:17843"/>
    </ligand>
</feature>
<feature type="binding site" evidence="1">
    <location>
        <position position="66"/>
    </location>
    <ligand>
        <name>tRNA</name>
        <dbReference type="ChEBI" id="CHEBI:17843"/>
    </ligand>
</feature>
<feature type="binding site" evidence="1">
    <location>
        <position position="68"/>
    </location>
    <ligand>
        <name>tRNA</name>
        <dbReference type="ChEBI" id="CHEBI:17843"/>
    </ligand>
</feature>
<feature type="binding site" evidence="1">
    <location>
        <position position="114"/>
    </location>
    <ligand>
        <name>tRNA</name>
        <dbReference type="ChEBI" id="CHEBI:17843"/>
    </ligand>
</feature>
<feature type="site" description="Discriminates between blocked and unblocked aminoacyl-tRNA" evidence="1">
    <location>
        <position position="10"/>
    </location>
</feature>
<feature type="site" description="Stabilizes the basic form of H active site to accept a proton" evidence="1">
    <location>
        <position position="93"/>
    </location>
</feature>